<protein>
    <recommendedName>
        <fullName>5'-3' exonuclease</fullName>
        <ecNumber>3.1.11.-</ecNumber>
    </recommendedName>
</protein>
<keyword id="KW-0238">DNA-binding</keyword>
<keyword id="KW-0269">Exonuclease</keyword>
<keyword id="KW-0378">Hydrolase</keyword>
<keyword id="KW-0540">Nuclease</keyword>
<keyword id="KW-1185">Reference proteome</keyword>
<organism>
    <name type="scientific">Buchnera aphidicola subsp. Acyrthosiphon pisum (strain APS)</name>
    <name type="common">Acyrthosiphon pisum symbiotic bacterium</name>
    <dbReference type="NCBI Taxonomy" id="107806"/>
    <lineage>
        <taxon>Bacteria</taxon>
        <taxon>Pseudomonadati</taxon>
        <taxon>Pseudomonadota</taxon>
        <taxon>Gammaproteobacteria</taxon>
        <taxon>Enterobacterales</taxon>
        <taxon>Erwiniaceae</taxon>
        <taxon>Buchnera</taxon>
    </lineage>
</organism>
<reference key="1">
    <citation type="journal article" date="2000" name="Nature">
        <title>Genome sequence of the endocellular bacterial symbiont of aphids Buchnera sp. APS.</title>
        <authorList>
            <person name="Shigenobu S."/>
            <person name="Watanabe H."/>
            <person name="Hattori M."/>
            <person name="Sakaki Y."/>
            <person name="Ishikawa H."/>
        </authorList>
    </citation>
    <scope>NUCLEOTIDE SEQUENCE [LARGE SCALE GENOMIC DNA]</scope>
    <source>
        <strain>APS</strain>
    </source>
</reference>
<dbReference type="EC" id="3.1.11.-"/>
<dbReference type="EMBL" id="BA000003">
    <property type="protein sequence ID" value="BAB13129.1"/>
    <property type="molecule type" value="Genomic_DNA"/>
</dbReference>
<dbReference type="RefSeq" id="NP_240243.1">
    <property type="nucleotide sequence ID" value="NC_002528.1"/>
</dbReference>
<dbReference type="RefSeq" id="WP_010896113.1">
    <property type="nucleotide sequence ID" value="NC_002528.1"/>
</dbReference>
<dbReference type="SMR" id="P57506"/>
<dbReference type="STRING" id="563178.BUAP5A_424"/>
<dbReference type="EnsemblBacteria" id="BAB13129">
    <property type="protein sequence ID" value="BAB13129"/>
    <property type="gene ID" value="BAB13129"/>
</dbReference>
<dbReference type="KEGG" id="buc:BU431"/>
<dbReference type="PATRIC" id="fig|107806.10.peg.440"/>
<dbReference type="eggNOG" id="COG0258">
    <property type="taxonomic scope" value="Bacteria"/>
</dbReference>
<dbReference type="HOGENOM" id="CLU_004675_1_0_6"/>
<dbReference type="BioCyc" id="BAPH107806:GBZJ-424-MONOMER"/>
<dbReference type="Proteomes" id="UP000001806">
    <property type="component" value="Chromosome"/>
</dbReference>
<dbReference type="GO" id="GO:0008409">
    <property type="term" value="F:5'-3' exonuclease activity"/>
    <property type="evidence" value="ECO:0007669"/>
    <property type="project" value="InterPro"/>
</dbReference>
<dbReference type="GO" id="GO:0017108">
    <property type="term" value="F:5'-flap endonuclease activity"/>
    <property type="evidence" value="ECO:0007669"/>
    <property type="project" value="InterPro"/>
</dbReference>
<dbReference type="GO" id="GO:0003677">
    <property type="term" value="F:DNA binding"/>
    <property type="evidence" value="ECO:0007669"/>
    <property type="project" value="UniProtKB-KW"/>
</dbReference>
<dbReference type="GO" id="GO:0033567">
    <property type="term" value="P:DNA replication, Okazaki fragment processing"/>
    <property type="evidence" value="ECO:0007669"/>
    <property type="project" value="InterPro"/>
</dbReference>
<dbReference type="CDD" id="cd09898">
    <property type="entry name" value="H3TH_53EXO"/>
    <property type="match status" value="1"/>
</dbReference>
<dbReference type="CDD" id="cd09859">
    <property type="entry name" value="PIN_53EXO"/>
    <property type="match status" value="1"/>
</dbReference>
<dbReference type="FunFam" id="1.10.150.20:FF:000003">
    <property type="entry name" value="DNA polymerase I"/>
    <property type="match status" value="1"/>
</dbReference>
<dbReference type="Gene3D" id="1.10.150.20">
    <property type="entry name" value="5' to 3' exonuclease, C-terminal subdomain"/>
    <property type="match status" value="1"/>
</dbReference>
<dbReference type="Gene3D" id="3.40.50.1010">
    <property type="entry name" value="5'-nuclease"/>
    <property type="match status" value="1"/>
</dbReference>
<dbReference type="InterPro" id="IPR020046">
    <property type="entry name" value="5-3_exonucl_a-hlix_arch_N"/>
</dbReference>
<dbReference type="InterPro" id="IPR002421">
    <property type="entry name" value="5-3_exonuclease"/>
</dbReference>
<dbReference type="InterPro" id="IPR036279">
    <property type="entry name" value="5-3_exonuclease_C_sf"/>
</dbReference>
<dbReference type="InterPro" id="IPR020045">
    <property type="entry name" value="DNA_polI_H3TH"/>
</dbReference>
<dbReference type="InterPro" id="IPR038969">
    <property type="entry name" value="FEN"/>
</dbReference>
<dbReference type="InterPro" id="IPR008918">
    <property type="entry name" value="HhH2"/>
</dbReference>
<dbReference type="InterPro" id="IPR029060">
    <property type="entry name" value="PIN-like_dom_sf"/>
</dbReference>
<dbReference type="NCBIfam" id="NF011545">
    <property type="entry name" value="PRK14976.1-2"/>
    <property type="match status" value="1"/>
</dbReference>
<dbReference type="PANTHER" id="PTHR42646:SF2">
    <property type="entry name" value="5'-3' EXONUCLEASE FAMILY PROTEIN"/>
    <property type="match status" value="1"/>
</dbReference>
<dbReference type="PANTHER" id="PTHR42646">
    <property type="entry name" value="FLAP ENDONUCLEASE XNI"/>
    <property type="match status" value="1"/>
</dbReference>
<dbReference type="Pfam" id="PF01367">
    <property type="entry name" value="5_3_exonuc"/>
    <property type="match status" value="1"/>
</dbReference>
<dbReference type="Pfam" id="PF02739">
    <property type="entry name" value="5_3_exonuc_N"/>
    <property type="match status" value="1"/>
</dbReference>
<dbReference type="SMART" id="SM00475">
    <property type="entry name" value="53EXOc"/>
    <property type="match status" value="1"/>
</dbReference>
<dbReference type="SMART" id="SM00279">
    <property type="entry name" value="HhH2"/>
    <property type="match status" value="1"/>
</dbReference>
<dbReference type="SUPFAM" id="SSF47807">
    <property type="entry name" value="5' to 3' exonuclease, C-terminal subdomain"/>
    <property type="match status" value="1"/>
</dbReference>
<dbReference type="SUPFAM" id="SSF88723">
    <property type="entry name" value="PIN domain-like"/>
    <property type="match status" value="1"/>
</dbReference>
<evidence type="ECO:0000250" key="1"/>
<evidence type="ECO:0000255" key="2"/>
<gene>
    <name type="ordered locus">BU431</name>
</gene>
<proteinExistence type="inferred from homology"/>
<sequence>MNHIKNNPVIIIDGSLYLYASYYAFCNLENTSGKPCGAIYGMLKIIDNIFKKYKNLKKIIIIFDSSRKTFRNKLFKEYKKNRSSMPDLLVMQIQPLFEILKKIGIKTLTIPGIEADDVIGSLSYQLEKQGEKILILSHDKDMLQLVTENINIFHKKNNCIITSEIIQEKYGIKPKEFIDFLALMGDATDNIPGVPKIGIKTALFLINKFSNIENIYNNIEKIKSLPLRNAKNISIQLKNNKERALLSYKLARIKLDIPIDIKLKDIILKKYCSKNTFQIFKNYFSS</sequence>
<feature type="chain" id="PRO_0000101283" description="5'-3' exonuclease">
    <location>
        <begin position="1"/>
        <end position="286"/>
    </location>
</feature>
<feature type="domain" description="5'-3' exonuclease" evidence="2">
    <location>
        <begin position="172"/>
        <end position="270"/>
    </location>
</feature>
<name>EX53_BUCAI</name>
<accession>P57506</accession>
<comment type="function">
    <text evidence="1">5'-3' exonuclease acting preferentially on double-stranded DNA.</text>
</comment>